<name>TYSY_SHEDO</name>
<evidence type="ECO:0000255" key="1">
    <source>
        <dbReference type="HAMAP-Rule" id="MF_00008"/>
    </source>
</evidence>
<sequence length="264" mass="30183">MKQYLALMEHILAHGAVKTDRTGTGTRSVFGYQMRFDLNQGFPLVTTKKCHLRSIIHELLWFLQGDTNVAYLHEHNVSIWDEWADDKGNLGPVYGAQWRSWPTQSGKAVDQISQIIEQIKTQPDSRRLIVSAWNVGELDKMALAPCHALFQFYVADGKLSCQLYQRSCDVFLGLPFNIASYALLTMMVAQQCDLALGDFVWTGGDTHLYSNHMEQTKLQLSREPHALPQMNILRKPESIFDYQFDDFELVNYQPHPHIKAPVAI</sequence>
<feature type="chain" id="PRO_1000000670" description="Thymidylate synthase">
    <location>
        <begin position="1"/>
        <end position="264"/>
    </location>
</feature>
<feature type="active site" description="Nucleophile" evidence="1">
    <location>
        <position position="146"/>
    </location>
</feature>
<feature type="binding site" description="in other chain" evidence="1">
    <location>
        <position position="21"/>
    </location>
    <ligand>
        <name>dUMP</name>
        <dbReference type="ChEBI" id="CHEBI:246422"/>
        <note>ligand shared between dimeric partners</note>
    </ligand>
</feature>
<feature type="binding site" evidence="1">
    <location>
        <position position="51"/>
    </location>
    <ligand>
        <name>(6R)-5,10-methylene-5,6,7,8-tetrahydrofolate</name>
        <dbReference type="ChEBI" id="CHEBI:15636"/>
    </ligand>
</feature>
<feature type="binding site" evidence="1">
    <location>
        <begin position="126"/>
        <end position="127"/>
    </location>
    <ligand>
        <name>dUMP</name>
        <dbReference type="ChEBI" id="CHEBI:246422"/>
        <note>ligand shared between dimeric partners</note>
    </ligand>
</feature>
<feature type="binding site" description="in other chain" evidence="1">
    <location>
        <begin position="166"/>
        <end position="169"/>
    </location>
    <ligand>
        <name>dUMP</name>
        <dbReference type="ChEBI" id="CHEBI:246422"/>
        <note>ligand shared between dimeric partners</note>
    </ligand>
</feature>
<feature type="binding site" evidence="1">
    <location>
        <position position="169"/>
    </location>
    <ligand>
        <name>(6R)-5,10-methylene-5,6,7,8-tetrahydrofolate</name>
        <dbReference type="ChEBI" id="CHEBI:15636"/>
    </ligand>
</feature>
<feature type="binding site" description="in other chain" evidence="1">
    <location>
        <position position="177"/>
    </location>
    <ligand>
        <name>dUMP</name>
        <dbReference type="ChEBI" id="CHEBI:246422"/>
        <note>ligand shared between dimeric partners</note>
    </ligand>
</feature>
<feature type="binding site" description="in other chain" evidence="1">
    <location>
        <begin position="207"/>
        <end position="209"/>
    </location>
    <ligand>
        <name>dUMP</name>
        <dbReference type="ChEBI" id="CHEBI:246422"/>
        <note>ligand shared between dimeric partners</note>
    </ligand>
</feature>
<feature type="binding site" evidence="1">
    <location>
        <position position="263"/>
    </location>
    <ligand>
        <name>(6R)-5,10-methylene-5,6,7,8-tetrahydrofolate</name>
        <dbReference type="ChEBI" id="CHEBI:15636"/>
    </ligand>
</feature>
<dbReference type="EC" id="2.1.1.45" evidence="1"/>
<dbReference type="EMBL" id="CP000302">
    <property type="protein sequence ID" value="ABE56058.1"/>
    <property type="molecule type" value="Genomic_DNA"/>
</dbReference>
<dbReference type="RefSeq" id="WP_011497208.1">
    <property type="nucleotide sequence ID" value="NC_007954.1"/>
</dbReference>
<dbReference type="SMR" id="Q12KG8"/>
<dbReference type="STRING" id="318161.Sden_2779"/>
<dbReference type="KEGG" id="sdn:Sden_2779"/>
<dbReference type="eggNOG" id="COG0207">
    <property type="taxonomic scope" value="Bacteria"/>
</dbReference>
<dbReference type="HOGENOM" id="CLU_021669_0_0_6"/>
<dbReference type="OrthoDB" id="9774633at2"/>
<dbReference type="UniPathway" id="UPA00575"/>
<dbReference type="Proteomes" id="UP000001982">
    <property type="component" value="Chromosome"/>
</dbReference>
<dbReference type="GO" id="GO:0005829">
    <property type="term" value="C:cytosol"/>
    <property type="evidence" value="ECO:0007669"/>
    <property type="project" value="TreeGrafter"/>
</dbReference>
<dbReference type="GO" id="GO:0004799">
    <property type="term" value="F:thymidylate synthase activity"/>
    <property type="evidence" value="ECO:0007669"/>
    <property type="project" value="UniProtKB-UniRule"/>
</dbReference>
<dbReference type="GO" id="GO:0006231">
    <property type="term" value="P:dTMP biosynthetic process"/>
    <property type="evidence" value="ECO:0007669"/>
    <property type="project" value="UniProtKB-UniRule"/>
</dbReference>
<dbReference type="GO" id="GO:0006235">
    <property type="term" value="P:dTTP biosynthetic process"/>
    <property type="evidence" value="ECO:0007669"/>
    <property type="project" value="UniProtKB-UniRule"/>
</dbReference>
<dbReference type="GO" id="GO:0032259">
    <property type="term" value="P:methylation"/>
    <property type="evidence" value="ECO:0007669"/>
    <property type="project" value="UniProtKB-KW"/>
</dbReference>
<dbReference type="CDD" id="cd00351">
    <property type="entry name" value="TS_Pyrimidine_HMase"/>
    <property type="match status" value="1"/>
</dbReference>
<dbReference type="FunFam" id="3.30.572.10:FF:000001">
    <property type="entry name" value="Thymidylate synthase"/>
    <property type="match status" value="1"/>
</dbReference>
<dbReference type="Gene3D" id="3.30.572.10">
    <property type="entry name" value="Thymidylate synthase/dCMP hydroxymethylase domain"/>
    <property type="match status" value="1"/>
</dbReference>
<dbReference type="HAMAP" id="MF_00008">
    <property type="entry name" value="Thymidy_synth_bact"/>
    <property type="match status" value="1"/>
</dbReference>
<dbReference type="InterPro" id="IPR045097">
    <property type="entry name" value="Thymidate_synth/dCMP_Mease"/>
</dbReference>
<dbReference type="InterPro" id="IPR023451">
    <property type="entry name" value="Thymidate_synth/dCMP_Mease_dom"/>
</dbReference>
<dbReference type="InterPro" id="IPR036926">
    <property type="entry name" value="Thymidate_synth/dCMP_Mease_sf"/>
</dbReference>
<dbReference type="InterPro" id="IPR000398">
    <property type="entry name" value="Thymidylate_synthase"/>
</dbReference>
<dbReference type="InterPro" id="IPR020940">
    <property type="entry name" value="Thymidylate_synthase_AS"/>
</dbReference>
<dbReference type="NCBIfam" id="NF002497">
    <property type="entry name" value="PRK01827.1-3"/>
    <property type="match status" value="1"/>
</dbReference>
<dbReference type="NCBIfam" id="NF002499">
    <property type="entry name" value="PRK01827.1-5"/>
    <property type="match status" value="1"/>
</dbReference>
<dbReference type="NCBIfam" id="TIGR03284">
    <property type="entry name" value="thym_sym"/>
    <property type="match status" value="2"/>
</dbReference>
<dbReference type="PANTHER" id="PTHR11548:SF9">
    <property type="entry name" value="THYMIDYLATE SYNTHASE"/>
    <property type="match status" value="1"/>
</dbReference>
<dbReference type="PANTHER" id="PTHR11548">
    <property type="entry name" value="THYMIDYLATE SYNTHASE 1"/>
    <property type="match status" value="1"/>
</dbReference>
<dbReference type="Pfam" id="PF00303">
    <property type="entry name" value="Thymidylat_synt"/>
    <property type="match status" value="1"/>
</dbReference>
<dbReference type="PRINTS" id="PR00108">
    <property type="entry name" value="THYMDSNTHASE"/>
</dbReference>
<dbReference type="SUPFAM" id="SSF55831">
    <property type="entry name" value="Thymidylate synthase/dCMP hydroxymethylase"/>
    <property type="match status" value="1"/>
</dbReference>
<dbReference type="PROSITE" id="PS00091">
    <property type="entry name" value="THYMIDYLATE_SYNTHASE"/>
    <property type="match status" value="1"/>
</dbReference>
<comment type="function">
    <text evidence="1">Catalyzes the reductive methylation of 2'-deoxyuridine-5'-monophosphate (dUMP) to 2'-deoxythymidine-5'-monophosphate (dTMP) while utilizing 5,10-methylenetetrahydrofolate (mTHF) as the methyl donor and reductant in the reaction, yielding dihydrofolate (DHF) as a by-product. This enzymatic reaction provides an intracellular de novo source of dTMP, an essential precursor for DNA biosynthesis.</text>
</comment>
<comment type="catalytic activity">
    <reaction evidence="1">
        <text>dUMP + (6R)-5,10-methylene-5,6,7,8-tetrahydrofolate = 7,8-dihydrofolate + dTMP</text>
        <dbReference type="Rhea" id="RHEA:12104"/>
        <dbReference type="ChEBI" id="CHEBI:15636"/>
        <dbReference type="ChEBI" id="CHEBI:57451"/>
        <dbReference type="ChEBI" id="CHEBI:63528"/>
        <dbReference type="ChEBI" id="CHEBI:246422"/>
        <dbReference type="EC" id="2.1.1.45"/>
    </reaction>
</comment>
<comment type="pathway">
    <text evidence="1">Pyrimidine metabolism; dTTP biosynthesis.</text>
</comment>
<comment type="subunit">
    <text evidence="1">Homodimer.</text>
</comment>
<comment type="subcellular location">
    <subcellularLocation>
        <location evidence="1">Cytoplasm</location>
    </subcellularLocation>
</comment>
<comment type="similarity">
    <text evidence="1">Belongs to the thymidylate synthase family. Bacterial-type ThyA subfamily.</text>
</comment>
<accession>Q12KG8</accession>
<organism>
    <name type="scientific">Shewanella denitrificans (strain OS217 / ATCC BAA-1090 / DSM 15013)</name>
    <dbReference type="NCBI Taxonomy" id="318161"/>
    <lineage>
        <taxon>Bacteria</taxon>
        <taxon>Pseudomonadati</taxon>
        <taxon>Pseudomonadota</taxon>
        <taxon>Gammaproteobacteria</taxon>
        <taxon>Alteromonadales</taxon>
        <taxon>Shewanellaceae</taxon>
        <taxon>Shewanella</taxon>
    </lineage>
</organism>
<proteinExistence type="inferred from homology"/>
<protein>
    <recommendedName>
        <fullName evidence="1">Thymidylate synthase</fullName>
        <shortName evidence="1">TS</shortName>
        <shortName evidence="1">TSase</shortName>
        <ecNumber evidence="1">2.1.1.45</ecNumber>
    </recommendedName>
</protein>
<gene>
    <name evidence="1" type="primary">thyA</name>
    <name type="ordered locus">Sden_2779</name>
</gene>
<reference key="1">
    <citation type="submission" date="2006-03" db="EMBL/GenBank/DDBJ databases">
        <title>Complete sequence of Shewanella denitrificans OS217.</title>
        <authorList>
            <consortium name="US DOE Joint Genome Institute"/>
            <person name="Copeland A."/>
            <person name="Lucas S."/>
            <person name="Lapidus A."/>
            <person name="Barry K."/>
            <person name="Detter J.C."/>
            <person name="Glavina del Rio T."/>
            <person name="Hammon N."/>
            <person name="Israni S."/>
            <person name="Dalin E."/>
            <person name="Tice H."/>
            <person name="Pitluck S."/>
            <person name="Brettin T."/>
            <person name="Bruce D."/>
            <person name="Han C."/>
            <person name="Tapia R."/>
            <person name="Gilna P."/>
            <person name="Kiss H."/>
            <person name="Schmutz J."/>
            <person name="Larimer F."/>
            <person name="Land M."/>
            <person name="Hauser L."/>
            <person name="Kyrpides N."/>
            <person name="Lykidis A."/>
            <person name="Richardson P."/>
        </authorList>
    </citation>
    <scope>NUCLEOTIDE SEQUENCE [LARGE SCALE GENOMIC DNA]</scope>
    <source>
        <strain>OS217 / ATCC BAA-1090 / DSM 15013</strain>
    </source>
</reference>
<keyword id="KW-0963">Cytoplasm</keyword>
<keyword id="KW-0489">Methyltransferase</keyword>
<keyword id="KW-0545">Nucleotide biosynthesis</keyword>
<keyword id="KW-1185">Reference proteome</keyword>
<keyword id="KW-0808">Transferase</keyword>